<keyword id="KW-0238">DNA-binding</keyword>
<keyword id="KW-1185">Reference proteome</keyword>
<keyword id="KW-0677">Repeat</keyword>
<keyword id="KW-0804">Transcription</keyword>
<keyword id="KW-0805">Transcription regulation</keyword>
<reference key="1">
    <citation type="journal article" date="1998" name="Nature">
        <title>Deciphering the biology of Mycobacterium tuberculosis from the complete genome sequence.</title>
        <authorList>
            <person name="Cole S.T."/>
            <person name="Brosch R."/>
            <person name="Parkhill J."/>
            <person name="Garnier T."/>
            <person name="Churcher C.M."/>
            <person name="Harris D.E."/>
            <person name="Gordon S.V."/>
            <person name="Eiglmeier K."/>
            <person name="Gas S."/>
            <person name="Barry C.E. III"/>
            <person name="Tekaia F."/>
            <person name="Badcock K."/>
            <person name="Basham D."/>
            <person name="Brown D."/>
            <person name="Chillingworth T."/>
            <person name="Connor R."/>
            <person name="Davies R.M."/>
            <person name="Devlin K."/>
            <person name="Feltwell T."/>
            <person name="Gentles S."/>
            <person name="Hamlin N."/>
            <person name="Holroyd S."/>
            <person name="Hornsby T."/>
            <person name="Jagels K."/>
            <person name="Krogh A."/>
            <person name="McLean J."/>
            <person name="Moule S."/>
            <person name="Murphy L.D."/>
            <person name="Oliver S."/>
            <person name="Osborne J."/>
            <person name="Quail M.A."/>
            <person name="Rajandream M.A."/>
            <person name="Rogers J."/>
            <person name="Rutter S."/>
            <person name="Seeger K."/>
            <person name="Skelton S."/>
            <person name="Squares S."/>
            <person name="Squares R."/>
            <person name="Sulston J.E."/>
            <person name="Taylor K."/>
            <person name="Whitehead S."/>
            <person name="Barrell B.G."/>
        </authorList>
    </citation>
    <scope>NUCLEOTIDE SEQUENCE [LARGE SCALE GENOMIC DNA]</scope>
    <source>
        <strain>ATCC 25618 / H37Rv</strain>
    </source>
</reference>
<reference key="2">
    <citation type="journal article" date="2011" name="Mol. Cell. Proteomics">
        <title>Proteogenomic analysis of Mycobacterium tuberculosis by high resolution mass spectrometry.</title>
        <authorList>
            <person name="Kelkar D.S."/>
            <person name="Kumar D."/>
            <person name="Kumar P."/>
            <person name="Balakrishnan L."/>
            <person name="Muthusamy B."/>
            <person name="Yadav A.K."/>
            <person name="Shrivastava P."/>
            <person name="Marimuthu A."/>
            <person name="Anand S."/>
            <person name="Sundaram H."/>
            <person name="Kingsbury R."/>
            <person name="Harsha H.C."/>
            <person name="Nair B."/>
            <person name="Prasad T.S."/>
            <person name="Chauhan D.S."/>
            <person name="Katoch K."/>
            <person name="Katoch V.M."/>
            <person name="Kumar P."/>
            <person name="Chaerkady R."/>
            <person name="Ramachandran S."/>
            <person name="Dash D."/>
            <person name="Pandey A."/>
        </authorList>
    </citation>
    <scope>IDENTIFICATION BY MASS SPECTROMETRY [LARGE SCALE ANALYSIS]</scope>
    <source>
        <strain>ATCC 25618 / H37Rv</strain>
    </source>
</reference>
<accession>P9WMD1</accession>
<accession>L0T8L5</accession>
<accession>P67436</accession>
<accession>Q10774</accession>
<accession>Q79FM7</accession>
<sequence>MVGAVTQIADRPTDPSPWSPRETELLAVTLRLLQEHGYDRLTVDAVAASARASKATVYRRWPSKAELVLAAFIEGIRQVAVPPNTGNLRDDLLRLGELICREVGQHASTIRAVLVEVSRNPALNDVLQHQFVDHRKALIQYILQQAVDRGEISSAAISDELWDLLPGYLIFRSIIPNRPPTQDTVQALVDDVILPSLTRSTG</sequence>
<organism>
    <name type="scientific">Mycobacterium tuberculosis (strain ATCC 25618 / H37Rv)</name>
    <dbReference type="NCBI Taxonomy" id="83332"/>
    <lineage>
        <taxon>Bacteria</taxon>
        <taxon>Bacillati</taxon>
        <taxon>Actinomycetota</taxon>
        <taxon>Actinomycetes</taxon>
        <taxon>Mycobacteriales</taxon>
        <taxon>Mycobacteriaceae</taxon>
        <taxon>Mycobacterium</taxon>
        <taxon>Mycobacterium tuberculosis complex</taxon>
    </lineage>
</organism>
<gene>
    <name type="ordered locus">Rv1556</name>
    <name type="ORF">MTCY48.09c</name>
</gene>
<evidence type="ECO:0000255" key="1">
    <source>
        <dbReference type="PROSITE-ProRule" id="PRU00335"/>
    </source>
</evidence>
<evidence type="ECO:0000256" key="2">
    <source>
        <dbReference type="SAM" id="MobiDB-lite"/>
    </source>
</evidence>
<proteinExistence type="evidence at protein level"/>
<feature type="chain" id="PRO_0000070664" description="Uncharacterized HTH-type transcriptional regulator Rv1556">
    <location>
        <begin position="1"/>
        <end position="202"/>
    </location>
</feature>
<feature type="domain" description="HTH tetR-type" evidence="1">
    <location>
        <begin position="19"/>
        <end position="79"/>
    </location>
</feature>
<feature type="region of interest" description="Disordered" evidence="2">
    <location>
        <begin position="1"/>
        <end position="20"/>
    </location>
</feature>
<protein>
    <recommendedName>
        <fullName>Uncharacterized HTH-type transcriptional regulator Rv1556</fullName>
    </recommendedName>
</protein>
<dbReference type="EMBL" id="AL123456">
    <property type="protein sequence ID" value="CCP44320.1"/>
    <property type="molecule type" value="Genomic_DNA"/>
</dbReference>
<dbReference type="PIR" id="A70763">
    <property type="entry name" value="A70763"/>
</dbReference>
<dbReference type="RefSeq" id="NP_216072.1">
    <property type="nucleotide sequence ID" value="NC_000962.3"/>
</dbReference>
<dbReference type="RefSeq" id="WP_003407773.1">
    <property type="nucleotide sequence ID" value="NZ_NVQJ01000004.1"/>
</dbReference>
<dbReference type="SMR" id="P9WMD1"/>
<dbReference type="STRING" id="83332.Rv1556"/>
<dbReference type="PaxDb" id="83332-Rv1556"/>
<dbReference type="DNASU" id="886367"/>
<dbReference type="GeneID" id="886367"/>
<dbReference type="KEGG" id="mtu:Rv1556"/>
<dbReference type="KEGG" id="mtv:RVBD_1556"/>
<dbReference type="TubercuList" id="Rv1556"/>
<dbReference type="eggNOG" id="COG1309">
    <property type="taxonomic scope" value="Bacteria"/>
</dbReference>
<dbReference type="InParanoid" id="P9WMD1"/>
<dbReference type="OrthoDB" id="9796019at2"/>
<dbReference type="PhylomeDB" id="P9WMD1"/>
<dbReference type="Proteomes" id="UP000001584">
    <property type="component" value="Chromosome"/>
</dbReference>
<dbReference type="GO" id="GO:0003700">
    <property type="term" value="F:DNA-binding transcription factor activity"/>
    <property type="evidence" value="ECO:0000318"/>
    <property type="project" value="GO_Central"/>
</dbReference>
<dbReference type="GO" id="GO:0000976">
    <property type="term" value="F:transcription cis-regulatory region binding"/>
    <property type="evidence" value="ECO:0000318"/>
    <property type="project" value="GO_Central"/>
</dbReference>
<dbReference type="GO" id="GO:0006355">
    <property type="term" value="P:regulation of DNA-templated transcription"/>
    <property type="evidence" value="ECO:0000318"/>
    <property type="project" value="GO_Central"/>
</dbReference>
<dbReference type="Gene3D" id="1.10.10.60">
    <property type="entry name" value="Homeodomain-like"/>
    <property type="match status" value="1"/>
</dbReference>
<dbReference type="Gene3D" id="1.10.357.10">
    <property type="entry name" value="Tetracycline Repressor, domain 2"/>
    <property type="match status" value="1"/>
</dbReference>
<dbReference type="InterPro" id="IPR023772">
    <property type="entry name" value="DNA-bd_HTH_TetR-type_CS"/>
</dbReference>
<dbReference type="InterPro" id="IPR009057">
    <property type="entry name" value="Homeodomain-like_sf"/>
</dbReference>
<dbReference type="InterPro" id="IPR050109">
    <property type="entry name" value="HTH-type_TetR-like_transc_reg"/>
</dbReference>
<dbReference type="InterPro" id="IPR001647">
    <property type="entry name" value="HTH_TetR"/>
</dbReference>
<dbReference type="InterPro" id="IPR036271">
    <property type="entry name" value="Tet_transcr_reg_TetR-rel_C_sf"/>
</dbReference>
<dbReference type="InterPro" id="IPR011075">
    <property type="entry name" value="TetR_C"/>
</dbReference>
<dbReference type="PANTHER" id="PTHR30055">
    <property type="entry name" value="HTH-TYPE TRANSCRIPTIONAL REGULATOR RUTR"/>
    <property type="match status" value="1"/>
</dbReference>
<dbReference type="PANTHER" id="PTHR30055:SF149">
    <property type="entry name" value="TETR-FAMILY TRANSCRIPTIONAL REGULATOR"/>
    <property type="match status" value="1"/>
</dbReference>
<dbReference type="Pfam" id="PF16859">
    <property type="entry name" value="TetR_C_11"/>
    <property type="match status" value="1"/>
</dbReference>
<dbReference type="Pfam" id="PF00440">
    <property type="entry name" value="TetR_N"/>
    <property type="match status" value="1"/>
</dbReference>
<dbReference type="PRINTS" id="PR00455">
    <property type="entry name" value="HTHTETR"/>
</dbReference>
<dbReference type="SUPFAM" id="SSF46689">
    <property type="entry name" value="Homeodomain-like"/>
    <property type="match status" value="1"/>
</dbReference>
<dbReference type="SUPFAM" id="SSF48498">
    <property type="entry name" value="Tetracyclin repressor-like, C-terminal domain"/>
    <property type="match status" value="1"/>
</dbReference>
<dbReference type="PROSITE" id="PS01081">
    <property type="entry name" value="HTH_TETR_1"/>
    <property type="match status" value="1"/>
</dbReference>
<dbReference type="PROSITE" id="PS50977">
    <property type="entry name" value="HTH_TETR_2"/>
    <property type="match status" value="1"/>
</dbReference>
<name>Y1556_MYCTU</name>